<gene>
    <name evidence="1" type="primary">ycf3</name>
</gene>
<dbReference type="EMBL" id="DQ317523">
    <property type="protein sequence ID" value="ABC25114.1"/>
    <property type="molecule type" value="Genomic_DNA"/>
</dbReference>
<dbReference type="RefSeq" id="YP_538754.1">
    <property type="nucleotide sequence ID" value="NC_007942.1"/>
</dbReference>
<dbReference type="SMR" id="Q2PMU4"/>
<dbReference type="FunCoup" id="Q2PMU4">
    <property type="interactions" value="55"/>
</dbReference>
<dbReference type="STRING" id="3847.Q2PMU4"/>
<dbReference type="GeneID" id="3989265"/>
<dbReference type="KEGG" id="gmx:3989265"/>
<dbReference type="eggNOG" id="KOG1124">
    <property type="taxonomic scope" value="Eukaryota"/>
</dbReference>
<dbReference type="InParanoid" id="Q2PMU4"/>
<dbReference type="Proteomes" id="UP000008827">
    <property type="component" value="Chloroplast"/>
</dbReference>
<dbReference type="GO" id="GO:0009535">
    <property type="term" value="C:chloroplast thylakoid membrane"/>
    <property type="evidence" value="ECO:0007669"/>
    <property type="project" value="UniProtKB-SubCell"/>
</dbReference>
<dbReference type="GO" id="GO:0048564">
    <property type="term" value="P:photosystem I assembly"/>
    <property type="evidence" value="ECO:0000318"/>
    <property type="project" value="GO_Central"/>
</dbReference>
<dbReference type="FunFam" id="1.25.40.10:FF:000004">
    <property type="entry name" value="Photosystem I assembly protein Ycf3"/>
    <property type="match status" value="1"/>
</dbReference>
<dbReference type="Gene3D" id="1.25.40.10">
    <property type="entry name" value="Tetratricopeptide repeat domain"/>
    <property type="match status" value="1"/>
</dbReference>
<dbReference type="HAMAP" id="MF_00439">
    <property type="entry name" value="Ycf3"/>
    <property type="match status" value="1"/>
</dbReference>
<dbReference type="InterPro" id="IPR022818">
    <property type="entry name" value="PSI_Ycf3_assembly"/>
</dbReference>
<dbReference type="InterPro" id="IPR011990">
    <property type="entry name" value="TPR-like_helical_dom_sf"/>
</dbReference>
<dbReference type="InterPro" id="IPR019734">
    <property type="entry name" value="TPR_rpt"/>
</dbReference>
<dbReference type="InterPro" id="IPR051685">
    <property type="entry name" value="Ycf3/AcsC/BcsC/TPR_MFPF"/>
</dbReference>
<dbReference type="NCBIfam" id="NF002725">
    <property type="entry name" value="PRK02603.1"/>
    <property type="match status" value="1"/>
</dbReference>
<dbReference type="PANTHER" id="PTHR44943">
    <property type="entry name" value="CELLULOSE SYNTHASE OPERON PROTEIN C"/>
    <property type="match status" value="1"/>
</dbReference>
<dbReference type="PANTHER" id="PTHR44943:SF8">
    <property type="entry name" value="TPR REPEAT-CONTAINING PROTEIN MJ0263"/>
    <property type="match status" value="1"/>
</dbReference>
<dbReference type="Pfam" id="PF00515">
    <property type="entry name" value="TPR_1"/>
    <property type="match status" value="1"/>
</dbReference>
<dbReference type="SMART" id="SM00028">
    <property type="entry name" value="TPR"/>
    <property type="match status" value="3"/>
</dbReference>
<dbReference type="SUPFAM" id="SSF48452">
    <property type="entry name" value="TPR-like"/>
    <property type="match status" value="1"/>
</dbReference>
<dbReference type="PROSITE" id="PS50005">
    <property type="entry name" value="TPR"/>
    <property type="match status" value="3"/>
</dbReference>
<dbReference type="PROSITE" id="PS50293">
    <property type="entry name" value="TPR_REGION"/>
    <property type="match status" value="1"/>
</dbReference>
<evidence type="ECO:0000255" key="1">
    <source>
        <dbReference type="HAMAP-Rule" id="MF_00439"/>
    </source>
</evidence>
<feature type="chain" id="PRO_0000275618" description="Photosystem I assembly protein Ycf3">
    <location>
        <begin position="1"/>
        <end position="168"/>
    </location>
</feature>
<feature type="repeat" description="TPR 1">
    <location>
        <begin position="35"/>
        <end position="68"/>
    </location>
</feature>
<feature type="repeat" description="TPR 2">
    <location>
        <begin position="72"/>
        <end position="105"/>
    </location>
</feature>
<feature type="repeat" description="TPR 3">
    <location>
        <begin position="120"/>
        <end position="153"/>
    </location>
</feature>
<keyword id="KW-0150">Chloroplast</keyword>
<keyword id="KW-0472">Membrane</keyword>
<keyword id="KW-0602">Photosynthesis</keyword>
<keyword id="KW-0934">Plastid</keyword>
<keyword id="KW-1185">Reference proteome</keyword>
<keyword id="KW-0677">Repeat</keyword>
<keyword id="KW-0793">Thylakoid</keyword>
<keyword id="KW-0802">TPR repeat</keyword>
<protein>
    <recommendedName>
        <fullName evidence="1">Photosystem I assembly protein Ycf3</fullName>
    </recommendedName>
</protein>
<sequence length="168" mass="19587">MPRSRINENFIDKTFSIVANILLRIIPTTSGEKRAFTYYRDGMSAQSEGNYAEALQNYYEAMRLEIDPYDRSYILYNIGLIHTSNGEHTKALEYYFRALERNPFLPQAFNNMAVICHYRGEQAIRQGDSEVAESWFNQAAEYWKQAIALTPGNYIEAQNWLKITGRFE</sequence>
<accession>Q2PMU4</accession>
<proteinExistence type="inferred from homology"/>
<geneLocation type="chloroplast"/>
<comment type="function">
    <text evidence="1">Essential for the assembly of the photosystem I (PSI) complex. May act as a chaperone-like factor to guide the assembly of the PSI subunits.</text>
</comment>
<comment type="subcellular location">
    <subcellularLocation>
        <location evidence="1">Plastid</location>
        <location evidence="1">Chloroplast thylakoid membrane</location>
        <topology evidence="1">Peripheral membrane protein</topology>
    </subcellularLocation>
</comment>
<comment type="similarity">
    <text evidence="1">Belongs to the Ycf3 family.</text>
</comment>
<organism>
    <name type="scientific">Glycine max</name>
    <name type="common">Soybean</name>
    <name type="synonym">Glycine hispida</name>
    <dbReference type="NCBI Taxonomy" id="3847"/>
    <lineage>
        <taxon>Eukaryota</taxon>
        <taxon>Viridiplantae</taxon>
        <taxon>Streptophyta</taxon>
        <taxon>Embryophyta</taxon>
        <taxon>Tracheophyta</taxon>
        <taxon>Spermatophyta</taxon>
        <taxon>Magnoliopsida</taxon>
        <taxon>eudicotyledons</taxon>
        <taxon>Gunneridae</taxon>
        <taxon>Pentapetalae</taxon>
        <taxon>rosids</taxon>
        <taxon>fabids</taxon>
        <taxon>Fabales</taxon>
        <taxon>Fabaceae</taxon>
        <taxon>Papilionoideae</taxon>
        <taxon>50 kb inversion clade</taxon>
        <taxon>NPAAA clade</taxon>
        <taxon>indigoferoid/millettioid clade</taxon>
        <taxon>Phaseoleae</taxon>
        <taxon>Glycine</taxon>
        <taxon>Glycine subgen. Soja</taxon>
    </lineage>
</organism>
<name>YCF3_SOYBN</name>
<reference key="1">
    <citation type="journal article" date="2005" name="Plant Mol. Biol.">
        <title>Complete chloroplast genome sequence of Glycine max and comparative analyses with other legume genomes.</title>
        <authorList>
            <person name="Saski C."/>
            <person name="Lee S.-B."/>
            <person name="Daniell H."/>
            <person name="Wood T.C."/>
            <person name="Tomkins J."/>
            <person name="Kim H.-G."/>
            <person name="Jansen R.K."/>
        </authorList>
    </citation>
    <scope>NUCLEOTIDE SEQUENCE [LARGE SCALE GENOMIC DNA]</scope>
    <source>
        <strain>cv. PI 437654</strain>
    </source>
</reference>